<keyword id="KW-0963">Cytoplasm</keyword>
<keyword id="KW-0342">GTP-binding</keyword>
<keyword id="KW-0378">Hydrolase</keyword>
<keyword id="KW-0479">Metal-binding</keyword>
<keyword id="KW-0547">Nucleotide-binding</keyword>
<keyword id="KW-1185">Reference proteome</keyword>
<keyword id="KW-0690">Ribosome biogenesis</keyword>
<keyword id="KW-0694">RNA-binding</keyword>
<keyword id="KW-0699">rRNA-binding</keyword>
<keyword id="KW-0862">Zinc</keyword>
<proteinExistence type="inferred from homology"/>
<name>RSGA_CARHZ</name>
<comment type="function">
    <text evidence="1">One of several proteins that assist in the late maturation steps of the functional core of the 30S ribosomal subunit. Helps release RbfA from mature subunits. May play a role in the assembly of ribosomal proteins into the subunit. Circularly permuted GTPase that catalyzes slow GTP hydrolysis, GTPase activity is stimulated by the 30S ribosomal subunit.</text>
</comment>
<comment type="cofactor">
    <cofactor evidence="1">
        <name>Zn(2+)</name>
        <dbReference type="ChEBI" id="CHEBI:29105"/>
    </cofactor>
    <text evidence="1">Binds 1 zinc ion per subunit.</text>
</comment>
<comment type="subunit">
    <text evidence="1">Monomer. Associates with 30S ribosomal subunit, binds 16S rRNA.</text>
</comment>
<comment type="subcellular location">
    <subcellularLocation>
        <location evidence="1">Cytoplasm</location>
    </subcellularLocation>
</comment>
<comment type="similarity">
    <text evidence="1">Belongs to the TRAFAC class YlqF/YawG GTPase family. RsgA subfamily.</text>
</comment>
<gene>
    <name evidence="1" type="primary">rsgA</name>
    <name type="ordered locus">CHY_1477</name>
</gene>
<organism>
    <name type="scientific">Carboxydothermus hydrogenoformans (strain ATCC BAA-161 / DSM 6008 / Z-2901)</name>
    <dbReference type="NCBI Taxonomy" id="246194"/>
    <lineage>
        <taxon>Bacteria</taxon>
        <taxon>Bacillati</taxon>
        <taxon>Bacillota</taxon>
        <taxon>Clostridia</taxon>
        <taxon>Thermoanaerobacterales</taxon>
        <taxon>Thermoanaerobacteraceae</taxon>
        <taxon>Carboxydothermus</taxon>
    </lineage>
</organism>
<accession>Q3AC25</accession>
<evidence type="ECO:0000255" key="1">
    <source>
        <dbReference type="HAMAP-Rule" id="MF_01820"/>
    </source>
</evidence>
<evidence type="ECO:0000255" key="2">
    <source>
        <dbReference type="PROSITE-ProRule" id="PRU01058"/>
    </source>
</evidence>
<dbReference type="EC" id="3.6.1.-" evidence="1"/>
<dbReference type="EMBL" id="CP000141">
    <property type="protein sequence ID" value="ABB13979.1"/>
    <property type="molecule type" value="Genomic_DNA"/>
</dbReference>
<dbReference type="RefSeq" id="WP_011344384.1">
    <property type="nucleotide sequence ID" value="NC_007503.1"/>
</dbReference>
<dbReference type="SMR" id="Q3AC25"/>
<dbReference type="FunCoup" id="Q3AC25">
    <property type="interactions" value="277"/>
</dbReference>
<dbReference type="STRING" id="246194.CHY_1477"/>
<dbReference type="KEGG" id="chy:CHY_1477"/>
<dbReference type="eggNOG" id="COG1162">
    <property type="taxonomic scope" value="Bacteria"/>
</dbReference>
<dbReference type="HOGENOM" id="CLU_033617_2_1_9"/>
<dbReference type="InParanoid" id="Q3AC25"/>
<dbReference type="OrthoDB" id="9809485at2"/>
<dbReference type="Proteomes" id="UP000002706">
    <property type="component" value="Chromosome"/>
</dbReference>
<dbReference type="GO" id="GO:0005737">
    <property type="term" value="C:cytoplasm"/>
    <property type="evidence" value="ECO:0007669"/>
    <property type="project" value="UniProtKB-SubCell"/>
</dbReference>
<dbReference type="GO" id="GO:0005525">
    <property type="term" value="F:GTP binding"/>
    <property type="evidence" value="ECO:0007669"/>
    <property type="project" value="UniProtKB-UniRule"/>
</dbReference>
<dbReference type="GO" id="GO:0003924">
    <property type="term" value="F:GTPase activity"/>
    <property type="evidence" value="ECO:0007669"/>
    <property type="project" value="UniProtKB-UniRule"/>
</dbReference>
<dbReference type="GO" id="GO:0046872">
    <property type="term" value="F:metal ion binding"/>
    <property type="evidence" value="ECO:0007669"/>
    <property type="project" value="UniProtKB-KW"/>
</dbReference>
<dbReference type="GO" id="GO:0019843">
    <property type="term" value="F:rRNA binding"/>
    <property type="evidence" value="ECO:0007669"/>
    <property type="project" value="UniProtKB-KW"/>
</dbReference>
<dbReference type="GO" id="GO:0042274">
    <property type="term" value="P:ribosomal small subunit biogenesis"/>
    <property type="evidence" value="ECO:0007669"/>
    <property type="project" value="UniProtKB-UniRule"/>
</dbReference>
<dbReference type="CDD" id="cd04466">
    <property type="entry name" value="S1_YloQ_GTPase"/>
    <property type="match status" value="1"/>
</dbReference>
<dbReference type="CDD" id="cd01854">
    <property type="entry name" value="YjeQ_EngC"/>
    <property type="match status" value="1"/>
</dbReference>
<dbReference type="Gene3D" id="2.40.50.140">
    <property type="entry name" value="Nucleic acid-binding proteins"/>
    <property type="match status" value="1"/>
</dbReference>
<dbReference type="Gene3D" id="3.40.50.300">
    <property type="entry name" value="P-loop containing nucleotide triphosphate hydrolases"/>
    <property type="match status" value="1"/>
</dbReference>
<dbReference type="Gene3D" id="1.10.40.50">
    <property type="entry name" value="Probable gtpase engc, domain 3"/>
    <property type="match status" value="1"/>
</dbReference>
<dbReference type="HAMAP" id="MF_01820">
    <property type="entry name" value="GTPase_RsgA"/>
    <property type="match status" value="1"/>
</dbReference>
<dbReference type="InterPro" id="IPR030378">
    <property type="entry name" value="G_CP_dom"/>
</dbReference>
<dbReference type="InterPro" id="IPR012340">
    <property type="entry name" value="NA-bd_OB-fold"/>
</dbReference>
<dbReference type="InterPro" id="IPR027417">
    <property type="entry name" value="P-loop_NTPase"/>
</dbReference>
<dbReference type="InterPro" id="IPR004881">
    <property type="entry name" value="Ribosome_biogen_GTPase_RsgA"/>
</dbReference>
<dbReference type="InterPro" id="IPR010914">
    <property type="entry name" value="RsgA_GTPase_dom"/>
</dbReference>
<dbReference type="InterPro" id="IPR031944">
    <property type="entry name" value="RsgA_N"/>
</dbReference>
<dbReference type="NCBIfam" id="TIGR00157">
    <property type="entry name" value="ribosome small subunit-dependent GTPase A"/>
    <property type="match status" value="1"/>
</dbReference>
<dbReference type="PANTHER" id="PTHR32120">
    <property type="entry name" value="SMALL RIBOSOMAL SUBUNIT BIOGENESIS GTPASE RSGA"/>
    <property type="match status" value="1"/>
</dbReference>
<dbReference type="PANTHER" id="PTHR32120:SF11">
    <property type="entry name" value="SMALL RIBOSOMAL SUBUNIT BIOGENESIS GTPASE RSGA 1, MITOCHONDRIAL-RELATED"/>
    <property type="match status" value="1"/>
</dbReference>
<dbReference type="Pfam" id="PF03193">
    <property type="entry name" value="RsgA_GTPase"/>
    <property type="match status" value="1"/>
</dbReference>
<dbReference type="Pfam" id="PF16745">
    <property type="entry name" value="RsgA_N"/>
    <property type="match status" value="1"/>
</dbReference>
<dbReference type="SUPFAM" id="SSF50249">
    <property type="entry name" value="Nucleic acid-binding proteins"/>
    <property type="match status" value="1"/>
</dbReference>
<dbReference type="SUPFAM" id="SSF52540">
    <property type="entry name" value="P-loop containing nucleoside triphosphate hydrolases"/>
    <property type="match status" value="1"/>
</dbReference>
<dbReference type="PROSITE" id="PS50936">
    <property type="entry name" value="ENGC_GTPASE"/>
    <property type="match status" value="1"/>
</dbReference>
<dbReference type="PROSITE" id="PS51721">
    <property type="entry name" value="G_CP"/>
    <property type="match status" value="1"/>
</dbReference>
<protein>
    <recommendedName>
        <fullName evidence="1">Small ribosomal subunit biogenesis GTPase RsgA</fullName>
        <ecNumber evidence="1">3.6.1.-</ecNumber>
    </recommendedName>
</protein>
<feature type="chain" id="PRO_1000188041" description="Small ribosomal subunit biogenesis GTPase RsgA">
    <location>
        <begin position="1"/>
        <end position="290"/>
    </location>
</feature>
<feature type="domain" description="CP-type G" evidence="2">
    <location>
        <begin position="63"/>
        <end position="220"/>
    </location>
</feature>
<feature type="binding site" evidence="1">
    <location>
        <begin position="112"/>
        <end position="115"/>
    </location>
    <ligand>
        <name>GTP</name>
        <dbReference type="ChEBI" id="CHEBI:37565"/>
    </ligand>
</feature>
<feature type="binding site" evidence="1">
    <location>
        <begin position="162"/>
        <end position="170"/>
    </location>
    <ligand>
        <name>GTP</name>
        <dbReference type="ChEBI" id="CHEBI:37565"/>
    </ligand>
</feature>
<feature type="binding site" evidence="1">
    <location>
        <position position="244"/>
    </location>
    <ligand>
        <name>Zn(2+)</name>
        <dbReference type="ChEBI" id="CHEBI:29105"/>
    </ligand>
</feature>
<feature type="binding site" evidence="1">
    <location>
        <position position="249"/>
    </location>
    <ligand>
        <name>Zn(2+)</name>
        <dbReference type="ChEBI" id="CHEBI:29105"/>
    </ligand>
</feature>
<feature type="binding site" evidence="1">
    <location>
        <position position="251"/>
    </location>
    <ligand>
        <name>Zn(2+)</name>
        <dbReference type="ChEBI" id="CHEBI:29105"/>
    </ligand>
</feature>
<feature type="binding site" evidence="1">
    <location>
        <position position="257"/>
    </location>
    <ligand>
        <name>Zn(2+)</name>
        <dbReference type="ChEBI" id="CHEBI:29105"/>
    </ligand>
</feature>
<sequence>MEGLVVKNYAGFYYVDTGKAIYMCKARGKFKKDNIKILTGDRVIIRELVPNSEGVIESLLPRKNELIRPPIANVDQVLLVFAFADPFPSTELIDRLLVMAYALRLEVVLVFNKFDLVNPESQKLFEYYKKILPKVVAITARGDTGIDELTDYLNQKISVLAGPSGVGKSTLINRLVPGAKLATGEVSPKIKRGRHTTRHVELIKLPFGGFIADTPGFSNLTLPEMDKLELQSYFPEFNQNRKYCYFPNCLHVKEPNCRVRELLETGEIPPFRYENYLTFLEEITSDERSS</sequence>
<reference key="1">
    <citation type="journal article" date="2005" name="PLoS Genet.">
        <title>Life in hot carbon monoxide: the complete genome sequence of Carboxydothermus hydrogenoformans Z-2901.</title>
        <authorList>
            <person name="Wu M."/>
            <person name="Ren Q."/>
            <person name="Durkin A.S."/>
            <person name="Daugherty S.C."/>
            <person name="Brinkac L.M."/>
            <person name="Dodson R.J."/>
            <person name="Madupu R."/>
            <person name="Sullivan S.A."/>
            <person name="Kolonay J.F."/>
            <person name="Nelson W.C."/>
            <person name="Tallon L.J."/>
            <person name="Jones K.M."/>
            <person name="Ulrich L.E."/>
            <person name="Gonzalez J.M."/>
            <person name="Zhulin I.B."/>
            <person name="Robb F.T."/>
            <person name="Eisen J.A."/>
        </authorList>
    </citation>
    <scope>NUCLEOTIDE SEQUENCE [LARGE SCALE GENOMIC DNA]</scope>
    <source>
        <strain>ATCC BAA-161 / DSM 6008 / Z-2901</strain>
    </source>
</reference>